<sequence length="117" mass="13384">MPRVKRGVQARARHKKVLKQAKGYYGARSRVYRVAFQAVTKAGQYAYRDRRAKKRQFRQLWIARINAASRQNGLSYSRFINGLKKASIEIDRKILADIAVFDKAAFAVLVEKAKAAL</sequence>
<dbReference type="EMBL" id="BA000037">
    <property type="protein sequence ID" value="BAC94706.1"/>
    <property type="molecule type" value="Genomic_DNA"/>
</dbReference>
<dbReference type="RefSeq" id="WP_004727974.1">
    <property type="nucleotide sequence ID" value="NC_005139.1"/>
</dbReference>
<dbReference type="SMR" id="Q7MK68"/>
<dbReference type="STRING" id="672.VV93_v1c17020"/>
<dbReference type="GeneID" id="95677414"/>
<dbReference type="KEGG" id="vvy:VV1942"/>
<dbReference type="eggNOG" id="COG0292">
    <property type="taxonomic scope" value="Bacteria"/>
</dbReference>
<dbReference type="HOGENOM" id="CLU_123265_0_1_6"/>
<dbReference type="Proteomes" id="UP000002675">
    <property type="component" value="Chromosome I"/>
</dbReference>
<dbReference type="GO" id="GO:1990904">
    <property type="term" value="C:ribonucleoprotein complex"/>
    <property type="evidence" value="ECO:0007669"/>
    <property type="project" value="UniProtKB-KW"/>
</dbReference>
<dbReference type="GO" id="GO:0005840">
    <property type="term" value="C:ribosome"/>
    <property type="evidence" value="ECO:0007669"/>
    <property type="project" value="UniProtKB-KW"/>
</dbReference>
<dbReference type="GO" id="GO:0019843">
    <property type="term" value="F:rRNA binding"/>
    <property type="evidence" value="ECO:0007669"/>
    <property type="project" value="UniProtKB-UniRule"/>
</dbReference>
<dbReference type="GO" id="GO:0003735">
    <property type="term" value="F:structural constituent of ribosome"/>
    <property type="evidence" value="ECO:0007669"/>
    <property type="project" value="InterPro"/>
</dbReference>
<dbReference type="GO" id="GO:0000027">
    <property type="term" value="P:ribosomal large subunit assembly"/>
    <property type="evidence" value="ECO:0007669"/>
    <property type="project" value="UniProtKB-UniRule"/>
</dbReference>
<dbReference type="GO" id="GO:0006412">
    <property type="term" value="P:translation"/>
    <property type="evidence" value="ECO:0007669"/>
    <property type="project" value="InterPro"/>
</dbReference>
<dbReference type="CDD" id="cd07026">
    <property type="entry name" value="Ribosomal_L20"/>
    <property type="match status" value="1"/>
</dbReference>
<dbReference type="FunFam" id="1.10.1900.20:FF:000001">
    <property type="entry name" value="50S ribosomal protein L20"/>
    <property type="match status" value="1"/>
</dbReference>
<dbReference type="Gene3D" id="6.10.160.10">
    <property type="match status" value="1"/>
</dbReference>
<dbReference type="Gene3D" id="1.10.1900.20">
    <property type="entry name" value="Ribosomal protein L20"/>
    <property type="match status" value="1"/>
</dbReference>
<dbReference type="HAMAP" id="MF_00382">
    <property type="entry name" value="Ribosomal_bL20"/>
    <property type="match status" value="1"/>
</dbReference>
<dbReference type="InterPro" id="IPR005813">
    <property type="entry name" value="Ribosomal_bL20"/>
</dbReference>
<dbReference type="InterPro" id="IPR049946">
    <property type="entry name" value="RIBOSOMAL_L20_CS"/>
</dbReference>
<dbReference type="InterPro" id="IPR035566">
    <property type="entry name" value="Ribosomal_protein_bL20_C"/>
</dbReference>
<dbReference type="NCBIfam" id="TIGR01032">
    <property type="entry name" value="rplT_bact"/>
    <property type="match status" value="1"/>
</dbReference>
<dbReference type="PANTHER" id="PTHR10986">
    <property type="entry name" value="39S RIBOSOMAL PROTEIN L20"/>
    <property type="match status" value="1"/>
</dbReference>
<dbReference type="Pfam" id="PF00453">
    <property type="entry name" value="Ribosomal_L20"/>
    <property type="match status" value="1"/>
</dbReference>
<dbReference type="PRINTS" id="PR00062">
    <property type="entry name" value="RIBOSOMALL20"/>
</dbReference>
<dbReference type="SUPFAM" id="SSF74731">
    <property type="entry name" value="Ribosomal protein L20"/>
    <property type="match status" value="1"/>
</dbReference>
<dbReference type="PROSITE" id="PS00937">
    <property type="entry name" value="RIBOSOMAL_L20"/>
    <property type="match status" value="1"/>
</dbReference>
<reference key="1">
    <citation type="journal article" date="2003" name="Genome Res.">
        <title>Comparative genome analysis of Vibrio vulnificus, a marine pathogen.</title>
        <authorList>
            <person name="Chen C.-Y."/>
            <person name="Wu K.-M."/>
            <person name="Chang Y.-C."/>
            <person name="Chang C.-H."/>
            <person name="Tsai H.-C."/>
            <person name="Liao T.-L."/>
            <person name="Liu Y.-M."/>
            <person name="Chen H.-J."/>
            <person name="Shen A.B.-T."/>
            <person name="Li J.-C."/>
            <person name="Su T.-L."/>
            <person name="Shao C.-P."/>
            <person name="Lee C.-T."/>
            <person name="Hor L.-I."/>
            <person name="Tsai S.-F."/>
        </authorList>
    </citation>
    <scope>NUCLEOTIDE SEQUENCE [LARGE SCALE GENOMIC DNA]</scope>
    <source>
        <strain>YJ016</strain>
    </source>
</reference>
<feature type="chain" id="PRO_0000177263" description="Large ribosomal subunit protein bL20">
    <location>
        <begin position="1"/>
        <end position="117"/>
    </location>
</feature>
<keyword id="KW-0687">Ribonucleoprotein</keyword>
<keyword id="KW-0689">Ribosomal protein</keyword>
<keyword id="KW-0694">RNA-binding</keyword>
<keyword id="KW-0699">rRNA-binding</keyword>
<proteinExistence type="inferred from homology"/>
<organism>
    <name type="scientific">Vibrio vulnificus (strain YJ016)</name>
    <dbReference type="NCBI Taxonomy" id="196600"/>
    <lineage>
        <taxon>Bacteria</taxon>
        <taxon>Pseudomonadati</taxon>
        <taxon>Pseudomonadota</taxon>
        <taxon>Gammaproteobacteria</taxon>
        <taxon>Vibrionales</taxon>
        <taxon>Vibrionaceae</taxon>
        <taxon>Vibrio</taxon>
    </lineage>
</organism>
<comment type="function">
    <text evidence="1">Binds directly to 23S ribosomal RNA and is necessary for the in vitro assembly process of the 50S ribosomal subunit. It is not involved in the protein synthesizing functions of that subunit.</text>
</comment>
<comment type="similarity">
    <text evidence="1">Belongs to the bacterial ribosomal protein bL20 family.</text>
</comment>
<evidence type="ECO:0000255" key="1">
    <source>
        <dbReference type="HAMAP-Rule" id="MF_00382"/>
    </source>
</evidence>
<evidence type="ECO:0000305" key="2"/>
<protein>
    <recommendedName>
        <fullName evidence="1">Large ribosomal subunit protein bL20</fullName>
    </recommendedName>
    <alternativeName>
        <fullName evidence="2">50S ribosomal protein L20</fullName>
    </alternativeName>
</protein>
<name>RL20_VIBVY</name>
<accession>Q7MK68</accession>
<gene>
    <name evidence="1" type="primary">rplT</name>
    <name type="ordered locus">VV1942</name>
</gene>